<sequence>MTEQTATQNYSFQAEVAQLLHLVTHSLYSNPEIFLRELISNASDACDKLRFEGINHPEYYEDDANLRVRVSLDKENKTITISDNGIGLSQQEAIDNLGTIAKSGTKDFMSKLTGDQKSDAQLIGQFGVGFYSGFIVADKITVESRRAGLPANDGVRWISGGTGDFEVQQITKDSRGTSIILHLRDDALDYLDAWKVKQIINKYSDHISLPIEMQKEVWQEEEVAEGEEPKGGQYVKTDEWEVINSASALWTRSKNEISEEQYIEFYKNLTHDFDAPLAWSHNRVEGNTEYTQLLYIPAKASSDIFTREAKAGIKLYVKRVFIMDDADNLIPNYLRFVKGVIDSADLPLNVSRELLQESRDVKTIREGNTRRVLTLLDGLAKSEDEKDQEKFKTFYQEFGSVLKEGLGEDFTNRERILKLLRYATSNQDEISTSFADYKARMKEGQKAIYYVSADSLAAAKNSPQLELFKKKGIEVLLMSERVDEWAMNFVHEFDGTPLQNVSKGAVDLGDLQDAEEKKALEQAAEQFKPVVDKLTDALKDKTKEVRVTTRLVDSPACLVTSDGELSPQLIRMLKQAGQAVPESKPILEINPEHPLVQKLEGSAQFDDLANVIFDQAVIAEGGLPEDPAAYVKRINSLLLK</sequence>
<name>HTPG_ACIAD</name>
<accession>Q6FF82</accession>
<feature type="chain" id="PRO_0000224193" description="Chaperone protein HtpG">
    <location>
        <begin position="1"/>
        <end position="640"/>
    </location>
</feature>
<feature type="region of interest" description="A; substrate-binding" evidence="1">
    <location>
        <begin position="1"/>
        <end position="352"/>
    </location>
</feature>
<feature type="region of interest" description="B" evidence="1">
    <location>
        <begin position="353"/>
        <end position="571"/>
    </location>
</feature>
<feature type="region of interest" description="C" evidence="1">
    <location>
        <begin position="572"/>
        <end position="640"/>
    </location>
</feature>
<evidence type="ECO:0000255" key="1">
    <source>
        <dbReference type="HAMAP-Rule" id="MF_00505"/>
    </source>
</evidence>
<gene>
    <name evidence="1" type="primary">htpG</name>
    <name type="ordered locus">ACIAD0316</name>
</gene>
<protein>
    <recommendedName>
        <fullName evidence="1">Chaperone protein HtpG</fullName>
    </recommendedName>
    <alternativeName>
        <fullName evidence="1">Heat shock protein HtpG</fullName>
    </alternativeName>
    <alternativeName>
        <fullName evidence="1">High temperature protein G</fullName>
    </alternativeName>
</protein>
<organism>
    <name type="scientific">Acinetobacter baylyi (strain ATCC 33305 / BD413 / ADP1)</name>
    <dbReference type="NCBI Taxonomy" id="62977"/>
    <lineage>
        <taxon>Bacteria</taxon>
        <taxon>Pseudomonadati</taxon>
        <taxon>Pseudomonadota</taxon>
        <taxon>Gammaproteobacteria</taxon>
        <taxon>Moraxellales</taxon>
        <taxon>Moraxellaceae</taxon>
        <taxon>Acinetobacter</taxon>
    </lineage>
</organism>
<dbReference type="EMBL" id="CR543861">
    <property type="protein sequence ID" value="CAG67275.1"/>
    <property type="molecule type" value="Genomic_DNA"/>
</dbReference>
<dbReference type="RefSeq" id="WP_004920581.1">
    <property type="nucleotide sequence ID" value="NC_005966.1"/>
</dbReference>
<dbReference type="SMR" id="Q6FF82"/>
<dbReference type="STRING" id="202950.GCA_001485005_00589"/>
<dbReference type="GeneID" id="45232829"/>
<dbReference type="KEGG" id="aci:ACIAD0316"/>
<dbReference type="eggNOG" id="COG0326">
    <property type="taxonomic scope" value="Bacteria"/>
</dbReference>
<dbReference type="HOGENOM" id="CLU_006684_3_0_6"/>
<dbReference type="OrthoDB" id="9802640at2"/>
<dbReference type="BioCyc" id="ASP62977:ACIAD_RS01500-MONOMER"/>
<dbReference type="Proteomes" id="UP000000430">
    <property type="component" value="Chromosome"/>
</dbReference>
<dbReference type="GO" id="GO:0005737">
    <property type="term" value="C:cytoplasm"/>
    <property type="evidence" value="ECO:0007669"/>
    <property type="project" value="UniProtKB-SubCell"/>
</dbReference>
<dbReference type="GO" id="GO:0005524">
    <property type="term" value="F:ATP binding"/>
    <property type="evidence" value="ECO:0007669"/>
    <property type="project" value="UniProtKB-UniRule"/>
</dbReference>
<dbReference type="GO" id="GO:0016887">
    <property type="term" value="F:ATP hydrolysis activity"/>
    <property type="evidence" value="ECO:0007669"/>
    <property type="project" value="InterPro"/>
</dbReference>
<dbReference type="GO" id="GO:0140662">
    <property type="term" value="F:ATP-dependent protein folding chaperone"/>
    <property type="evidence" value="ECO:0007669"/>
    <property type="project" value="InterPro"/>
</dbReference>
<dbReference type="GO" id="GO:0051082">
    <property type="term" value="F:unfolded protein binding"/>
    <property type="evidence" value="ECO:0007669"/>
    <property type="project" value="UniProtKB-UniRule"/>
</dbReference>
<dbReference type="CDD" id="cd16927">
    <property type="entry name" value="HATPase_Hsp90-like"/>
    <property type="match status" value="1"/>
</dbReference>
<dbReference type="FunFam" id="3.30.230.80:FF:000002">
    <property type="entry name" value="Molecular chaperone HtpG"/>
    <property type="match status" value="1"/>
</dbReference>
<dbReference type="FunFam" id="3.30.565.10:FF:000009">
    <property type="entry name" value="Molecular chaperone HtpG"/>
    <property type="match status" value="1"/>
</dbReference>
<dbReference type="Gene3D" id="3.30.230.80">
    <property type="match status" value="1"/>
</dbReference>
<dbReference type="Gene3D" id="3.40.50.11260">
    <property type="match status" value="1"/>
</dbReference>
<dbReference type="Gene3D" id="1.20.120.790">
    <property type="entry name" value="Heat shock protein 90, C-terminal domain"/>
    <property type="match status" value="1"/>
</dbReference>
<dbReference type="Gene3D" id="3.30.565.10">
    <property type="entry name" value="Histidine kinase-like ATPase, C-terminal domain"/>
    <property type="match status" value="1"/>
</dbReference>
<dbReference type="HAMAP" id="MF_00505">
    <property type="entry name" value="HSP90"/>
    <property type="match status" value="1"/>
</dbReference>
<dbReference type="InterPro" id="IPR036890">
    <property type="entry name" value="HATPase_C_sf"/>
</dbReference>
<dbReference type="InterPro" id="IPR037196">
    <property type="entry name" value="HSP90_C"/>
</dbReference>
<dbReference type="InterPro" id="IPR001404">
    <property type="entry name" value="Hsp90_fam"/>
</dbReference>
<dbReference type="InterPro" id="IPR020575">
    <property type="entry name" value="Hsp90_N"/>
</dbReference>
<dbReference type="InterPro" id="IPR020568">
    <property type="entry name" value="Ribosomal_Su5_D2-typ_SF"/>
</dbReference>
<dbReference type="NCBIfam" id="NF003555">
    <property type="entry name" value="PRK05218.1"/>
    <property type="match status" value="1"/>
</dbReference>
<dbReference type="PANTHER" id="PTHR11528">
    <property type="entry name" value="HEAT SHOCK PROTEIN 90 FAMILY MEMBER"/>
    <property type="match status" value="1"/>
</dbReference>
<dbReference type="Pfam" id="PF13589">
    <property type="entry name" value="HATPase_c_3"/>
    <property type="match status" value="1"/>
</dbReference>
<dbReference type="Pfam" id="PF00183">
    <property type="entry name" value="HSP90"/>
    <property type="match status" value="1"/>
</dbReference>
<dbReference type="PIRSF" id="PIRSF002583">
    <property type="entry name" value="Hsp90"/>
    <property type="match status" value="1"/>
</dbReference>
<dbReference type="PRINTS" id="PR00775">
    <property type="entry name" value="HEATSHOCK90"/>
</dbReference>
<dbReference type="SMART" id="SM00387">
    <property type="entry name" value="HATPase_c"/>
    <property type="match status" value="1"/>
</dbReference>
<dbReference type="SUPFAM" id="SSF55874">
    <property type="entry name" value="ATPase domain of HSP90 chaperone/DNA topoisomerase II/histidine kinase"/>
    <property type="match status" value="1"/>
</dbReference>
<dbReference type="SUPFAM" id="SSF110942">
    <property type="entry name" value="HSP90 C-terminal domain"/>
    <property type="match status" value="1"/>
</dbReference>
<dbReference type="SUPFAM" id="SSF54211">
    <property type="entry name" value="Ribosomal protein S5 domain 2-like"/>
    <property type="match status" value="1"/>
</dbReference>
<comment type="function">
    <text evidence="1">Molecular chaperone. Has ATPase activity.</text>
</comment>
<comment type="subunit">
    <text evidence="1">Homodimer.</text>
</comment>
<comment type="subcellular location">
    <subcellularLocation>
        <location evidence="1">Cytoplasm</location>
    </subcellularLocation>
</comment>
<comment type="similarity">
    <text evidence="1">Belongs to the heat shock protein 90 family.</text>
</comment>
<proteinExistence type="inferred from homology"/>
<reference key="1">
    <citation type="journal article" date="2004" name="Nucleic Acids Res.">
        <title>Unique features revealed by the genome sequence of Acinetobacter sp. ADP1, a versatile and naturally transformation competent bacterium.</title>
        <authorList>
            <person name="Barbe V."/>
            <person name="Vallenet D."/>
            <person name="Fonknechten N."/>
            <person name="Kreimeyer A."/>
            <person name="Oztas S."/>
            <person name="Labarre L."/>
            <person name="Cruveiller S."/>
            <person name="Robert C."/>
            <person name="Duprat S."/>
            <person name="Wincker P."/>
            <person name="Ornston L.N."/>
            <person name="Weissenbach J."/>
            <person name="Marliere P."/>
            <person name="Cohen G.N."/>
            <person name="Medigue C."/>
        </authorList>
    </citation>
    <scope>NUCLEOTIDE SEQUENCE [LARGE SCALE GENOMIC DNA]</scope>
    <source>
        <strain>ATCC 33305 / BD413 / ADP1</strain>
    </source>
</reference>
<keyword id="KW-0067">ATP-binding</keyword>
<keyword id="KW-0143">Chaperone</keyword>
<keyword id="KW-0963">Cytoplasm</keyword>
<keyword id="KW-0547">Nucleotide-binding</keyword>
<keyword id="KW-0346">Stress response</keyword>